<organism>
    <name type="scientific">Methanocaldococcus jannaschii (strain ATCC 43067 / DSM 2661 / JAL-1 / JCM 10045 / NBRC 100440)</name>
    <name type="common">Methanococcus jannaschii</name>
    <dbReference type="NCBI Taxonomy" id="243232"/>
    <lineage>
        <taxon>Archaea</taxon>
        <taxon>Methanobacteriati</taxon>
        <taxon>Methanobacteriota</taxon>
        <taxon>Methanomada group</taxon>
        <taxon>Methanococci</taxon>
        <taxon>Methanococcales</taxon>
        <taxon>Methanocaldococcaceae</taxon>
        <taxon>Methanocaldococcus</taxon>
    </lineage>
</organism>
<reference key="1">
    <citation type="journal article" date="1996" name="Science">
        <title>Complete genome sequence of the methanogenic archaeon, Methanococcus jannaschii.</title>
        <authorList>
            <person name="Bult C.J."/>
            <person name="White O."/>
            <person name="Olsen G.J."/>
            <person name="Zhou L."/>
            <person name="Fleischmann R.D."/>
            <person name="Sutton G.G."/>
            <person name="Blake J.A."/>
            <person name="FitzGerald L.M."/>
            <person name="Clayton R.A."/>
            <person name="Gocayne J.D."/>
            <person name="Kerlavage A.R."/>
            <person name="Dougherty B.A."/>
            <person name="Tomb J.-F."/>
            <person name="Adams M.D."/>
            <person name="Reich C.I."/>
            <person name="Overbeek R."/>
            <person name="Kirkness E.F."/>
            <person name="Weinstock K.G."/>
            <person name="Merrick J.M."/>
            <person name="Glodek A."/>
            <person name="Scott J.L."/>
            <person name="Geoghagen N.S.M."/>
            <person name="Weidman J.F."/>
            <person name="Fuhrmann J.L."/>
            <person name="Nguyen D."/>
            <person name="Utterback T.R."/>
            <person name="Kelley J.M."/>
            <person name="Peterson J.D."/>
            <person name="Sadow P.W."/>
            <person name="Hanna M.C."/>
            <person name="Cotton M.D."/>
            <person name="Roberts K.M."/>
            <person name="Hurst M.A."/>
            <person name="Kaine B.P."/>
            <person name="Borodovsky M."/>
            <person name="Klenk H.-P."/>
            <person name="Fraser C.M."/>
            <person name="Smith H.O."/>
            <person name="Woese C.R."/>
            <person name="Venter J.C."/>
        </authorList>
    </citation>
    <scope>NUCLEOTIDE SEQUENCE [LARGE SCALE GENOMIC DNA]</scope>
    <source>
        <strain>ATCC 43067 / DSM 2661 / JAL-1 / JCM 10045 / NBRC 100440</strain>
    </source>
</reference>
<proteinExistence type="predicted"/>
<feature type="chain" id="PRO_0000107247" description="Uncharacterized protein MJ1279">
    <location>
        <begin position="1"/>
        <end position="185"/>
    </location>
</feature>
<name>Y1279_METJA</name>
<dbReference type="EMBL" id="L77117">
    <property type="protein sequence ID" value="AAB99285.1"/>
    <property type="molecule type" value="Genomic_DNA"/>
</dbReference>
<dbReference type="PIR" id="F64459">
    <property type="entry name" value="F64459"/>
</dbReference>
<dbReference type="STRING" id="243232.MJ_1279"/>
<dbReference type="PaxDb" id="243232-MJ_1279"/>
<dbReference type="EnsemblBacteria" id="AAB99285">
    <property type="protein sequence ID" value="AAB99285"/>
    <property type="gene ID" value="MJ_1279"/>
</dbReference>
<dbReference type="KEGG" id="mja:MJ_1279"/>
<dbReference type="eggNOG" id="arCOG10917">
    <property type="taxonomic scope" value="Archaea"/>
</dbReference>
<dbReference type="HOGENOM" id="CLU_1574965_0_0_2"/>
<dbReference type="InParanoid" id="Q58675"/>
<dbReference type="Proteomes" id="UP000000805">
    <property type="component" value="Chromosome"/>
</dbReference>
<keyword id="KW-1185">Reference proteome</keyword>
<sequence length="185" mass="21379">MVILMDKRFIELIKKGWKLKNEENKATYIDEVFLGAIITTLTDNGYVLMDIASNGNFHYFMFEHLESWDRIKIVAEVLPHSLTDVKVIGARMFIEFSYGVMIKGIPPSLFGLGLKGYLSQMLSNIGSIRYEYDGYYTFVNCATYLLINDYIDFDTLTIDWEKLNNDINAIISSLAKYLEIHKKVE</sequence>
<gene>
    <name type="ordered locus">MJ1279</name>
</gene>
<accession>Q58675</accession>
<protein>
    <recommendedName>
        <fullName>Uncharacterized protein MJ1279</fullName>
    </recommendedName>
</protein>